<evidence type="ECO:0000255" key="1">
    <source>
        <dbReference type="HAMAP-Rule" id="MF_01227"/>
    </source>
</evidence>
<name>PYRG_LEGPH</name>
<feature type="chain" id="PRO_0000266146" description="CTP synthase">
    <location>
        <begin position="1"/>
        <end position="545"/>
    </location>
</feature>
<feature type="domain" description="Glutamine amidotransferase type-1" evidence="1">
    <location>
        <begin position="290"/>
        <end position="541"/>
    </location>
</feature>
<feature type="region of interest" description="Amidoligase domain" evidence="1">
    <location>
        <begin position="1"/>
        <end position="265"/>
    </location>
</feature>
<feature type="active site" description="Nucleophile; for glutamine hydrolysis" evidence="1">
    <location>
        <position position="378"/>
    </location>
</feature>
<feature type="active site" evidence="1">
    <location>
        <position position="514"/>
    </location>
</feature>
<feature type="active site" evidence="1">
    <location>
        <position position="516"/>
    </location>
</feature>
<feature type="binding site" evidence="1">
    <location>
        <position position="13"/>
    </location>
    <ligand>
        <name>CTP</name>
        <dbReference type="ChEBI" id="CHEBI:37563"/>
        <note>allosteric inhibitor</note>
    </ligand>
</feature>
<feature type="binding site" evidence="1">
    <location>
        <position position="13"/>
    </location>
    <ligand>
        <name>UTP</name>
        <dbReference type="ChEBI" id="CHEBI:46398"/>
    </ligand>
</feature>
<feature type="binding site" evidence="1">
    <location>
        <begin position="14"/>
        <end position="19"/>
    </location>
    <ligand>
        <name>ATP</name>
        <dbReference type="ChEBI" id="CHEBI:30616"/>
    </ligand>
</feature>
<feature type="binding site" evidence="1">
    <location>
        <position position="71"/>
    </location>
    <ligand>
        <name>ATP</name>
        <dbReference type="ChEBI" id="CHEBI:30616"/>
    </ligand>
</feature>
<feature type="binding site" evidence="1">
    <location>
        <position position="71"/>
    </location>
    <ligand>
        <name>Mg(2+)</name>
        <dbReference type="ChEBI" id="CHEBI:18420"/>
    </ligand>
</feature>
<feature type="binding site" evidence="1">
    <location>
        <position position="139"/>
    </location>
    <ligand>
        <name>Mg(2+)</name>
        <dbReference type="ChEBI" id="CHEBI:18420"/>
    </ligand>
</feature>
<feature type="binding site" evidence="1">
    <location>
        <begin position="146"/>
        <end position="148"/>
    </location>
    <ligand>
        <name>CTP</name>
        <dbReference type="ChEBI" id="CHEBI:37563"/>
        <note>allosteric inhibitor</note>
    </ligand>
</feature>
<feature type="binding site" evidence="1">
    <location>
        <begin position="186"/>
        <end position="191"/>
    </location>
    <ligand>
        <name>CTP</name>
        <dbReference type="ChEBI" id="CHEBI:37563"/>
        <note>allosteric inhibitor</note>
    </ligand>
</feature>
<feature type="binding site" evidence="1">
    <location>
        <begin position="186"/>
        <end position="191"/>
    </location>
    <ligand>
        <name>UTP</name>
        <dbReference type="ChEBI" id="CHEBI:46398"/>
    </ligand>
</feature>
<feature type="binding site" evidence="1">
    <location>
        <position position="222"/>
    </location>
    <ligand>
        <name>CTP</name>
        <dbReference type="ChEBI" id="CHEBI:37563"/>
        <note>allosteric inhibitor</note>
    </ligand>
</feature>
<feature type="binding site" evidence="1">
    <location>
        <position position="222"/>
    </location>
    <ligand>
        <name>UTP</name>
        <dbReference type="ChEBI" id="CHEBI:46398"/>
    </ligand>
</feature>
<feature type="binding site" evidence="1">
    <location>
        <position position="351"/>
    </location>
    <ligand>
        <name>L-glutamine</name>
        <dbReference type="ChEBI" id="CHEBI:58359"/>
    </ligand>
</feature>
<feature type="binding site" evidence="1">
    <location>
        <begin position="379"/>
        <end position="382"/>
    </location>
    <ligand>
        <name>L-glutamine</name>
        <dbReference type="ChEBI" id="CHEBI:58359"/>
    </ligand>
</feature>
<feature type="binding site" evidence="1">
    <location>
        <position position="402"/>
    </location>
    <ligand>
        <name>L-glutamine</name>
        <dbReference type="ChEBI" id="CHEBI:58359"/>
    </ligand>
</feature>
<feature type="binding site" evidence="1">
    <location>
        <position position="469"/>
    </location>
    <ligand>
        <name>L-glutamine</name>
        <dbReference type="ChEBI" id="CHEBI:58359"/>
    </ligand>
</feature>
<protein>
    <recommendedName>
        <fullName evidence="1">CTP synthase</fullName>
        <ecNumber evidence="1">6.3.4.2</ecNumber>
    </recommendedName>
    <alternativeName>
        <fullName evidence="1">Cytidine 5'-triphosphate synthase</fullName>
    </alternativeName>
    <alternativeName>
        <fullName evidence="1">Cytidine triphosphate synthetase</fullName>
        <shortName evidence="1">CTP synthetase</shortName>
        <shortName evidence="1">CTPS</shortName>
    </alternativeName>
    <alternativeName>
        <fullName evidence="1">UTP--ammonia ligase</fullName>
    </alternativeName>
</protein>
<keyword id="KW-0067">ATP-binding</keyword>
<keyword id="KW-0315">Glutamine amidotransferase</keyword>
<keyword id="KW-0436">Ligase</keyword>
<keyword id="KW-0460">Magnesium</keyword>
<keyword id="KW-0479">Metal-binding</keyword>
<keyword id="KW-0547">Nucleotide-binding</keyword>
<keyword id="KW-0665">Pyrimidine biosynthesis</keyword>
<keyword id="KW-1185">Reference proteome</keyword>
<accession>Q5ZWA4</accession>
<comment type="function">
    <text evidence="1">Catalyzes the ATP-dependent amination of UTP to CTP with either L-glutamine or ammonia as the source of nitrogen. Regulates intracellular CTP levels through interactions with the four ribonucleotide triphosphates.</text>
</comment>
<comment type="catalytic activity">
    <reaction evidence="1">
        <text>UTP + L-glutamine + ATP + H2O = CTP + L-glutamate + ADP + phosphate + 2 H(+)</text>
        <dbReference type="Rhea" id="RHEA:26426"/>
        <dbReference type="ChEBI" id="CHEBI:15377"/>
        <dbReference type="ChEBI" id="CHEBI:15378"/>
        <dbReference type="ChEBI" id="CHEBI:29985"/>
        <dbReference type="ChEBI" id="CHEBI:30616"/>
        <dbReference type="ChEBI" id="CHEBI:37563"/>
        <dbReference type="ChEBI" id="CHEBI:43474"/>
        <dbReference type="ChEBI" id="CHEBI:46398"/>
        <dbReference type="ChEBI" id="CHEBI:58359"/>
        <dbReference type="ChEBI" id="CHEBI:456216"/>
        <dbReference type="EC" id="6.3.4.2"/>
    </reaction>
</comment>
<comment type="catalytic activity">
    <reaction evidence="1">
        <text>L-glutamine + H2O = L-glutamate + NH4(+)</text>
        <dbReference type="Rhea" id="RHEA:15889"/>
        <dbReference type="ChEBI" id="CHEBI:15377"/>
        <dbReference type="ChEBI" id="CHEBI:28938"/>
        <dbReference type="ChEBI" id="CHEBI:29985"/>
        <dbReference type="ChEBI" id="CHEBI:58359"/>
    </reaction>
</comment>
<comment type="catalytic activity">
    <reaction evidence="1">
        <text>UTP + NH4(+) + ATP = CTP + ADP + phosphate + 2 H(+)</text>
        <dbReference type="Rhea" id="RHEA:16597"/>
        <dbReference type="ChEBI" id="CHEBI:15378"/>
        <dbReference type="ChEBI" id="CHEBI:28938"/>
        <dbReference type="ChEBI" id="CHEBI:30616"/>
        <dbReference type="ChEBI" id="CHEBI:37563"/>
        <dbReference type="ChEBI" id="CHEBI:43474"/>
        <dbReference type="ChEBI" id="CHEBI:46398"/>
        <dbReference type="ChEBI" id="CHEBI:456216"/>
    </reaction>
</comment>
<comment type="activity regulation">
    <text evidence="1">Allosterically activated by GTP, when glutamine is the substrate; GTP has no effect on the reaction when ammonia is the substrate. The allosteric effector GTP functions by stabilizing the protein conformation that binds the tetrahedral intermediate(s) formed during glutamine hydrolysis. Inhibited by the product CTP, via allosteric rather than competitive inhibition.</text>
</comment>
<comment type="pathway">
    <text evidence="1">Pyrimidine metabolism; CTP biosynthesis via de novo pathway; CTP from UDP: step 2/2.</text>
</comment>
<comment type="subunit">
    <text evidence="1">Homotetramer.</text>
</comment>
<comment type="miscellaneous">
    <text evidence="1">CTPSs have evolved a hybrid strategy for distinguishing between UTP and CTP. The overlapping regions of the product feedback inhibitory and substrate sites recognize a common feature in both compounds, the triphosphate moiety. To differentiate isosteric substrate and product pyrimidine rings, an additional pocket far from the expected kinase/ligase catalytic site, specifically recognizes the cytosine and ribose portions of the product inhibitor.</text>
</comment>
<comment type="similarity">
    <text evidence="1">Belongs to the CTP synthase family.</text>
</comment>
<proteinExistence type="inferred from homology"/>
<reference key="1">
    <citation type="journal article" date="2004" name="Science">
        <title>The genomic sequence of the accidental pathogen Legionella pneumophila.</title>
        <authorList>
            <person name="Chien M."/>
            <person name="Morozova I."/>
            <person name="Shi S."/>
            <person name="Sheng H."/>
            <person name="Chen J."/>
            <person name="Gomez S.M."/>
            <person name="Asamani G."/>
            <person name="Hill K."/>
            <person name="Nuara J."/>
            <person name="Feder M."/>
            <person name="Rineer J."/>
            <person name="Greenberg J.J."/>
            <person name="Steshenko V."/>
            <person name="Park S.H."/>
            <person name="Zhao B."/>
            <person name="Teplitskaya E."/>
            <person name="Edwards J.R."/>
            <person name="Pampou S."/>
            <person name="Georghiou A."/>
            <person name="Chou I.-C."/>
            <person name="Iannuccilli W."/>
            <person name="Ulz M.E."/>
            <person name="Kim D.H."/>
            <person name="Geringer-Sameth A."/>
            <person name="Goldsberry C."/>
            <person name="Morozov P."/>
            <person name="Fischer S.G."/>
            <person name="Segal G."/>
            <person name="Qu X."/>
            <person name="Rzhetsky A."/>
            <person name="Zhang P."/>
            <person name="Cayanis E."/>
            <person name="De Jong P.J."/>
            <person name="Ju J."/>
            <person name="Kalachikov S."/>
            <person name="Shuman H.A."/>
            <person name="Russo J.J."/>
        </authorList>
    </citation>
    <scope>NUCLEOTIDE SEQUENCE [LARGE SCALE GENOMIC DNA]</scope>
    <source>
        <strain>Philadelphia 1 / ATCC 33152 / DSM 7513</strain>
    </source>
</reference>
<gene>
    <name evidence="1" type="primary">pyrG</name>
    <name type="ordered locus">lpg1181</name>
</gene>
<sequence>MTKYIFITGGVVSSLGKGIAAASLAAILEARGLRVTLIKLDPYINVDPGTMSPFQHGEVFVTNDGAETDLDLGHYERFVKTTMTKRNNFTSGKIYENVIKKERRGDYLGGTVQVIPHITNEIKRCIKLGADAFDVAMVEIGGTVGDIESLPFLEAIRQMRIELGSQRAIFIHLTLVPYIATSGETKTKPTQHSVKELRSIGIQPDVLICRSEKPLSMADRAKIALFTNVEKEAVISLEDANSIYQIPMILHAQHLDEIVVKKLSLEAKQADLSEWQRVVDMQAVQTMTVKIAMVGKYTELNDAYKSINEALLHAGIHTETKVEIIYFDAEMIEKHGALLLESIDAILVPGGFGERGVEGKIKAIQYAREHKVPFLGICLGMQTAVIEFARNVVGLTGANSTEFNKETLYPVLGLISEWMDADGSKQIRDENTDLGGTMRLGGQYCHLAEGTLARKVYGKPQIIERHRHRYEVNNKYVDSLVKHGLIISGRSADNSLVEMIELADHPWFLACQFHPEFTSNPRDSHPLFKEFVLAARIHHQEKDKK</sequence>
<organism>
    <name type="scientific">Legionella pneumophila subsp. pneumophila (strain Philadelphia 1 / ATCC 33152 / DSM 7513)</name>
    <dbReference type="NCBI Taxonomy" id="272624"/>
    <lineage>
        <taxon>Bacteria</taxon>
        <taxon>Pseudomonadati</taxon>
        <taxon>Pseudomonadota</taxon>
        <taxon>Gammaproteobacteria</taxon>
        <taxon>Legionellales</taxon>
        <taxon>Legionellaceae</taxon>
        <taxon>Legionella</taxon>
    </lineage>
</organism>
<dbReference type="EC" id="6.3.4.2" evidence="1"/>
<dbReference type="EMBL" id="AE017354">
    <property type="protein sequence ID" value="AAU27267.1"/>
    <property type="molecule type" value="Genomic_DNA"/>
</dbReference>
<dbReference type="RefSeq" id="WP_010946915.1">
    <property type="nucleotide sequence ID" value="NC_002942.5"/>
</dbReference>
<dbReference type="RefSeq" id="YP_095214.1">
    <property type="nucleotide sequence ID" value="NC_002942.5"/>
</dbReference>
<dbReference type="SMR" id="Q5ZWA4"/>
<dbReference type="STRING" id="272624.lpg1181"/>
<dbReference type="PaxDb" id="272624-lpg1181"/>
<dbReference type="KEGG" id="lpn:lpg1181"/>
<dbReference type="PATRIC" id="fig|272624.6.peg.1244"/>
<dbReference type="eggNOG" id="COG0504">
    <property type="taxonomic scope" value="Bacteria"/>
</dbReference>
<dbReference type="HOGENOM" id="CLU_011675_5_0_6"/>
<dbReference type="OrthoDB" id="9801107at2"/>
<dbReference type="UniPathway" id="UPA00159">
    <property type="reaction ID" value="UER00277"/>
</dbReference>
<dbReference type="Proteomes" id="UP000000609">
    <property type="component" value="Chromosome"/>
</dbReference>
<dbReference type="GO" id="GO:0005829">
    <property type="term" value="C:cytosol"/>
    <property type="evidence" value="ECO:0007669"/>
    <property type="project" value="TreeGrafter"/>
</dbReference>
<dbReference type="GO" id="GO:0005524">
    <property type="term" value="F:ATP binding"/>
    <property type="evidence" value="ECO:0007669"/>
    <property type="project" value="UniProtKB-KW"/>
</dbReference>
<dbReference type="GO" id="GO:0003883">
    <property type="term" value="F:CTP synthase activity"/>
    <property type="evidence" value="ECO:0007669"/>
    <property type="project" value="UniProtKB-UniRule"/>
</dbReference>
<dbReference type="GO" id="GO:0004359">
    <property type="term" value="F:glutaminase activity"/>
    <property type="evidence" value="ECO:0007669"/>
    <property type="project" value="RHEA"/>
</dbReference>
<dbReference type="GO" id="GO:0042802">
    <property type="term" value="F:identical protein binding"/>
    <property type="evidence" value="ECO:0007669"/>
    <property type="project" value="TreeGrafter"/>
</dbReference>
<dbReference type="GO" id="GO:0046872">
    <property type="term" value="F:metal ion binding"/>
    <property type="evidence" value="ECO:0007669"/>
    <property type="project" value="UniProtKB-KW"/>
</dbReference>
<dbReference type="GO" id="GO:0044210">
    <property type="term" value="P:'de novo' CTP biosynthetic process"/>
    <property type="evidence" value="ECO:0007669"/>
    <property type="project" value="UniProtKB-UniRule"/>
</dbReference>
<dbReference type="GO" id="GO:0019856">
    <property type="term" value="P:pyrimidine nucleobase biosynthetic process"/>
    <property type="evidence" value="ECO:0007669"/>
    <property type="project" value="TreeGrafter"/>
</dbReference>
<dbReference type="CDD" id="cd03113">
    <property type="entry name" value="CTPS_N"/>
    <property type="match status" value="1"/>
</dbReference>
<dbReference type="CDD" id="cd01746">
    <property type="entry name" value="GATase1_CTP_Synthase"/>
    <property type="match status" value="1"/>
</dbReference>
<dbReference type="FunFam" id="3.40.50.300:FF:000009">
    <property type="entry name" value="CTP synthase"/>
    <property type="match status" value="1"/>
</dbReference>
<dbReference type="FunFam" id="3.40.50.880:FF:000002">
    <property type="entry name" value="CTP synthase"/>
    <property type="match status" value="1"/>
</dbReference>
<dbReference type="Gene3D" id="3.40.50.880">
    <property type="match status" value="1"/>
</dbReference>
<dbReference type="Gene3D" id="3.40.50.300">
    <property type="entry name" value="P-loop containing nucleotide triphosphate hydrolases"/>
    <property type="match status" value="1"/>
</dbReference>
<dbReference type="HAMAP" id="MF_01227">
    <property type="entry name" value="PyrG"/>
    <property type="match status" value="1"/>
</dbReference>
<dbReference type="InterPro" id="IPR029062">
    <property type="entry name" value="Class_I_gatase-like"/>
</dbReference>
<dbReference type="InterPro" id="IPR004468">
    <property type="entry name" value="CTP_synthase"/>
</dbReference>
<dbReference type="InterPro" id="IPR017456">
    <property type="entry name" value="CTP_synthase_N"/>
</dbReference>
<dbReference type="InterPro" id="IPR017926">
    <property type="entry name" value="GATASE"/>
</dbReference>
<dbReference type="InterPro" id="IPR033828">
    <property type="entry name" value="GATase1_CTP_Synthase"/>
</dbReference>
<dbReference type="InterPro" id="IPR027417">
    <property type="entry name" value="P-loop_NTPase"/>
</dbReference>
<dbReference type="NCBIfam" id="NF003792">
    <property type="entry name" value="PRK05380.1"/>
    <property type="match status" value="1"/>
</dbReference>
<dbReference type="NCBIfam" id="TIGR00337">
    <property type="entry name" value="PyrG"/>
    <property type="match status" value="1"/>
</dbReference>
<dbReference type="PANTHER" id="PTHR11550">
    <property type="entry name" value="CTP SYNTHASE"/>
    <property type="match status" value="1"/>
</dbReference>
<dbReference type="PANTHER" id="PTHR11550:SF0">
    <property type="entry name" value="CTP SYNTHASE-RELATED"/>
    <property type="match status" value="1"/>
</dbReference>
<dbReference type="Pfam" id="PF06418">
    <property type="entry name" value="CTP_synth_N"/>
    <property type="match status" value="1"/>
</dbReference>
<dbReference type="Pfam" id="PF00117">
    <property type="entry name" value="GATase"/>
    <property type="match status" value="1"/>
</dbReference>
<dbReference type="SUPFAM" id="SSF52317">
    <property type="entry name" value="Class I glutamine amidotransferase-like"/>
    <property type="match status" value="1"/>
</dbReference>
<dbReference type="SUPFAM" id="SSF52540">
    <property type="entry name" value="P-loop containing nucleoside triphosphate hydrolases"/>
    <property type="match status" value="1"/>
</dbReference>
<dbReference type="PROSITE" id="PS51273">
    <property type="entry name" value="GATASE_TYPE_1"/>
    <property type="match status" value="1"/>
</dbReference>